<gene>
    <name type="ordered locus">Swoo_3713</name>
</gene>
<accession>B1KDX1</accession>
<organism>
    <name type="scientific">Shewanella woodyi (strain ATCC 51908 / MS32)</name>
    <dbReference type="NCBI Taxonomy" id="392500"/>
    <lineage>
        <taxon>Bacteria</taxon>
        <taxon>Pseudomonadati</taxon>
        <taxon>Pseudomonadota</taxon>
        <taxon>Gammaproteobacteria</taxon>
        <taxon>Alteromonadales</taxon>
        <taxon>Shewanellaceae</taxon>
        <taxon>Shewanella</taxon>
    </lineage>
</organism>
<comment type="similarity">
    <text evidence="1">Belongs to the UPF0250 family.</text>
</comment>
<keyword id="KW-1185">Reference proteome</keyword>
<name>Y3713_SHEWM</name>
<protein>
    <recommendedName>
        <fullName evidence="1">UPF0250 protein Swoo_3713</fullName>
    </recommendedName>
</protein>
<dbReference type="EMBL" id="CP000961">
    <property type="protein sequence ID" value="ACA87973.1"/>
    <property type="molecule type" value="Genomic_DNA"/>
</dbReference>
<dbReference type="RefSeq" id="WP_012326305.1">
    <property type="nucleotide sequence ID" value="NC_010506.1"/>
</dbReference>
<dbReference type="SMR" id="B1KDX1"/>
<dbReference type="STRING" id="392500.Swoo_3713"/>
<dbReference type="KEGG" id="swd:Swoo_3713"/>
<dbReference type="eggNOG" id="COG2921">
    <property type="taxonomic scope" value="Bacteria"/>
</dbReference>
<dbReference type="HOGENOM" id="CLU_161438_2_1_6"/>
<dbReference type="Proteomes" id="UP000002168">
    <property type="component" value="Chromosome"/>
</dbReference>
<dbReference type="GO" id="GO:0005829">
    <property type="term" value="C:cytosol"/>
    <property type="evidence" value="ECO:0007669"/>
    <property type="project" value="TreeGrafter"/>
</dbReference>
<dbReference type="Gene3D" id="3.30.70.260">
    <property type="match status" value="1"/>
</dbReference>
<dbReference type="HAMAP" id="MF_00659">
    <property type="entry name" value="UPF0250"/>
    <property type="match status" value="1"/>
</dbReference>
<dbReference type="InterPro" id="IPR007454">
    <property type="entry name" value="UPF0250_YbeD-like"/>
</dbReference>
<dbReference type="InterPro" id="IPR027471">
    <property type="entry name" value="YbeD-like_sf"/>
</dbReference>
<dbReference type="NCBIfam" id="NF003447">
    <property type="entry name" value="PRK04998.1"/>
    <property type="match status" value="1"/>
</dbReference>
<dbReference type="PANTHER" id="PTHR38036">
    <property type="entry name" value="UPF0250 PROTEIN YBED"/>
    <property type="match status" value="1"/>
</dbReference>
<dbReference type="PANTHER" id="PTHR38036:SF1">
    <property type="entry name" value="UPF0250 PROTEIN YBED"/>
    <property type="match status" value="1"/>
</dbReference>
<dbReference type="Pfam" id="PF04359">
    <property type="entry name" value="DUF493"/>
    <property type="match status" value="1"/>
</dbReference>
<dbReference type="SUPFAM" id="SSF117991">
    <property type="entry name" value="YbeD/HP0495-like"/>
    <property type="match status" value="1"/>
</dbReference>
<feature type="chain" id="PRO_1000131262" description="UPF0250 protein Swoo_3713">
    <location>
        <begin position="1"/>
        <end position="88"/>
    </location>
</feature>
<reference key="1">
    <citation type="submission" date="2008-02" db="EMBL/GenBank/DDBJ databases">
        <title>Complete sequence of Shewanella woodyi ATCC 51908.</title>
        <authorList>
            <consortium name="US DOE Joint Genome Institute"/>
            <person name="Copeland A."/>
            <person name="Lucas S."/>
            <person name="Lapidus A."/>
            <person name="Glavina del Rio T."/>
            <person name="Dalin E."/>
            <person name="Tice H."/>
            <person name="Bruce D."/>
            <person name="Goodwin L."/>
            <person name="Pitluck S."/>
            <person name="Sims D."/>
            <person name="Brettin T."/>
            <person name="Detter J.C."/>
            <person name="Han C."/>
            <person name="Kuske C.R."/>
            <person name="Schmutz J."/>
            <person name="Larimer F."/>
            <person name="Land M."/>
            <person name="Hauser L."/>
            <person name="Kyrpides N."/>
            <person name="Lykidis A."/>
            <person name="Zhao J.-S."/>
            <person name="Richardson P."/>
        </authorList>
    </citation>
    <scope>NUCLEOTIDE SEQUENCE [LARGE SCALE GENOMIC DNA]</scope>
    <source>
        <strain>ATCC 51908 / MS32</strain>
    </source>
</reference>
<evidence type="ECO:0000255" key="1">
    <source>
        <dbReference type="HAMAP-Rule" id="MF_00659"/>
    </source>
</evidence>
<proteinExistence type="inferred from homology"/>
<sequence length="88" mass="9725">MLDTKFDELMEFPCSFPYKVVGDASETLADRVVAVVQKHVPGDYVPSSKVSSKGTYNSITIRVTVQSKEQVESLYIDLAAIEGVKRVL</sequence>